<reference key="1">
    <citation type="journal article" date="2009" name="Proc. Natl. Acad. Sci. U.S.A.">
        <title>Biogeography of the Sulfolobus islandicus pan-genome.</title>
        <authorList>
            <person name="Reno M.L."/>
            <person name="Held N.L."/>
            <person name="Fields C.J."/>
            <person name="Burke P.V."/>
            <person name="Whitaker R.J."/>
        </authorList>
    </citation>
    <scope>NUCLEOTIDE SEQUENCE [LARGE SCALE GENOMIC DNA]</scope>
    <source>
        <strain>Y.G.57.14 / Yellowstone #1</strain>
    </source>
</reference>
<feature type="chain" id="PRO_1000205346" description="Fibrillarin-like rRNA/tRNA 2'-O-methyltransferase">
    <location>
        <begin position="1"/>
        <end position="232"/>
    </location>
</feature>
<feature type="binding site" evidence="1">
    <location>
        <begin position="89"/>
        <end position="90"/>
    </location>
    <ligand>
        <name>S-adenosyl-L-methionine</name>
        <dbReference type="ChEBI" id="CHEBI:59789"/>
    </ligand>
</feature>
<feature type="binding site" evidence="1">
    <location>
        <begin position="108"/>
        <end position="109"/>
    </location>
    <ligand>
        <name>S-adenosyl-L-methionine</name>
        <dbReference type="ChEBI" id="CHEBI:59789"/>
    </ligand>
</feature>
<feature type="binding site" evidence="1">
    <location>
        <begin position="133"/>
        <end position="134"/>
    </location>
    <ligand>
        <name>S-adenosyl-L-methionine</name>
        <dbReference type="ChEBI" id="CHEBI:59789"/>
    </ligand>
</feature>
<feature type="binding site" evidence="1">
    <location>
        <begin position="153"/>
        <end position="156"/>
    </location>
    <ligand>
        <name>S-adenosyl-L-methionine</name>
        <dbReference type="ChEBI" id="CHEBI:59789"/>
    </ligand>
</feature>
<name>FLPA_SACI7</name>
<accession>C3NDZ8</accession>
<protein>
    <recommendedName>
        <fullName evidence="1">Fibrillarin-like rRNA/tRNA 2'-O-methyltransferase</fullName>
        <ecNumber evidence="1">2.1.1.-</ecNumber>
    </recommendedName>
</protein>
<organism>
    <name type="scientific">Saccharolobus islandicus (strain Y.G.57.14 / Yellowstone #1)</name>
    <name type="common">Sulfolobus islandicus</name>
    <dbReference type="NCBI Taxonomy" id="439386"/>
    <lineage>
        <taxon>Archaea</taxon>
        <taxon>Thermoproteota</taxon>
        <taxon>Thermoprotei</taxon>
        <taxon>Sulfolobales</taxon>
        <taxon>Sulfolobaceae</taxon>
        <taxon>Saccharolobus</taxon>
    </lineage>
</organism>
<gene>
    <name evidence="1" type="primary">flpA</name>
    <name type="ordered locus">YG5714_1271</name>
</gene>
<proteinExistence type="inferred from homology"/>
<dbReference type="EC" id="2.1.1.-" evidence="1"/>
<dbReference type="EMBL" id="CP001403">
    <property type="protein sequence ID" value="ACP45537.1"/>
    <property type="molecule type" value="Genomic_DNA"/>
</dbReference>
<dbReference type="RefSeq" id="WP_012711293.1">
    <property type="nucleotide sequence ID" value="NC_012622.1"/>
</dbReference>
<dbReference type="SMR" id="C3NDZ8"/>
<dbReference type="KEGG" id="siy:YG5714_1271"/>
<dbReference type="HOGENOM" id="CLU_059055_2_0_2"/>
<dbReference type="Proteomes" id="UP000002308">
    <property type="component" value="Chromosome"/>
</dbReference>
<dbReference type="GO" id="GO:1990259">
    <property type="term" value="F:histone H2AQ104 methyltransferase activity"/>
    <property type="evidence" value="ECO:0007669"/>
    <property type="project" value="TreeGrafter"/>
</dbReference>
<dbReference type="GO" id="GO:0003723">
    <property type="term" value="F:RNA binding"/>
    <property type="evidence" value="ECO:0007669"/>
    <property type="project" value="UniProtKB-UniRule"/>
</dbReference>
<dbReference type="GO" id="GO:0008649">
    <property type="term" value="F:rRNA methyltransferase activity"/>
    <property type="evidence" value="ECO:0007669"/>
    <property type="project" value="TreeGrafter"/>
</dbReference>
<dbReference type="GO" id="GO:0000494">
    <property type="term" value="P:box C/D sno(s)RNA 3'-end processing"/>
    <property type="evidence" value="ECO:0007669"/>
    <property type="project" value="TreeGrafter"/>
</dbReference>
<dbReference type="GO" id="GO:0008033">
    <property type="term" value="P:tRNA processing"/>
    <property type="evidence" value="ECO:0007669"/>
    <property type="project" value="UniProtKB-UniRule"/>
</dbReference>
<dbReference type="CDD" id="cd02440">
    <property type="entry name" value="AdoMet_MTases"/>
    <property type="match status" value="1"/>
</dbReference>
<dbReference type="FunFam" id="3.30.200.20:FF:000613">
    <property type="entry name" value="Fibrillarin-like rRNA/tRNA 2'-O-methyltransferase"/>
    <property type="match status" value="1"/>
</dbReference>
<dbReference type="Gene3D" id="3.30.200.20">
    <property type="entry name" value="Phosphorylase Kinase, domain 1"/>
    <property type="match status" value="1"/>
</dbReference>
<dbReference type="Gene3D" id="3.40.50.150">
    <property type="entry name" value="Vaccinia Virus protein VP39"/>
    <property type="match status" value="1"/>
</dbReference>
<dbReference type="HAMAP" id="MF_00351">
    <property type="entry name" value="RNA_methyltransf_FlpA"/>
    <property type="match status" value="1"/>
</dbReference>
<dbReference type="InterPro" id="IPR000692">
    <property type="entry name" value="Fibrillarin"/>
</dbReference>
<dbReference type="InterPro" id="IPR020813">
    <property type="entry name" value="Fibrillarin_CS"/>
</dbReference>
<dbReference type="InterPro" id="IPR029063">
    <property type="entry name" value="SAM-dependent_MTases_sf"/>
</dbReference>
<dbReference type="NCBIfam" id="NF003275">
    <property type="entry name" value="PRK04266.1-1"/>
    <property type="match status" value="1"/>
</dbReference>
<dbReference type="NCBIfam" id="NF003276">
    <property type="entry name" value="PRK04266.1-2"/>
    <property type="match status" value="1"/>
</dbReference>
<dbReference type="NCBIfam" id="NF003277">
    <property type="entry name" value="PRK04266.1-3"/>
    <property type="match status" value="1"/>
</dbReference>
<dbReference type="PANTHER" id="PTHR10335:SF17">
    <property type="entry name" value="FIBRILLARIN"/>
    <property type="match status" value="1"/>
</dbReference>
<dbReference type="PANTHER" id="PTHR10335">
    <property type="entry name" value="RRNA 2-O-METHYLTRANSFERASE FIBRILLARIN"/>
    <property type="match status" value="1"/>
</dbReference>
<dbReference type="Pfam" id="PF01269">
    <property type="entry name" value="Fibrillarin"/>
    <property type="match status" value="1"/>
</dbReference>
<dbReference type="PIRSF" id="PIRSF006540">
    <property type="entry name" value="Nop17p"/>
    <property type="match status" value="1"/>
</dbReference>
<dbReference type="PRINTS" id="PR00052">
    <property type="entry name" value="FIBRILLARIN"/>
</dbReference>
<dbReference type="SMART" id="SM01206">
    <property type="entry name" value="Fibrillarin"/>
    <property type="match status" value="1"/>
</dbReference>
<dbReference type="SUPFAM" id="SSF53335">
    <property type="entry name" value="S-adenosyl-L-methionine-dependent methyltransferases"/>
    <property type="match status" value="1"/>
</dbReference>
<dbReference type="PROSITE" id="PS00566">
    <property type="entry name" value="FIBRILLARIN"/>
    <property type="match status" value="1"/>
</dbReference>
<sequence>MSEVVTVKQTNMENIYECEFNDGSFRLCTRNLVSGFNVYGERLIKYEGVEYREWNAFRSKLAGAILKGLKTNPIRKGTKVLYLGAASGTTISHVSDIIELNGKAYGVEFSPRVVRELLLVAQRRPNIFPLLADARFPQSYKSVVENVDVLYVDIAQPDQTDIAIYNARFFLKVNGYMLLVIKARSIDVTKDPKEIYKAEVEKLENSNFETIQIINLDPYDKDHAIVLSRYKG</sequence>
<keyword id="KW-0489">Methyltransferase</keyword>
<keyword id="KW-0694">RNA-binding</keyword>
<keyword id="KW-0698">rRNA processing</keyword>
<keyword id="KW-0808">Transferase</keyword>
<keyword id="KW-0819">tRNA processing</keyword>
<comment type="function">
    <text evidence="1">Involved in pre-rRNA and tRNA processing. Utilizes the methyl donor S-adenosyl-L-methionine to catalyze the site-specific 2'-hydroxyl methylation of ribose moieties in rRNA and tRNA. Site specificity is provided by a guide RNA that base pairs with the substrate. Methylation occurs at a characteristic distance from the sequence involved in base pairing with the guide RNA.</text>
</comment>
<comment type="subunit">
    <text evidence="1">Interacts with nop5. Component of box C/D small ribonucleoprotein (sRNP) particles that contain rpl7ae, FlpA and nop5, plus a guide RNA.</text>
</comment>
<comment type="similarity">
    <text evidence="1">Belongs to the methyltransferase superfamily. Fibrillarin family.</text>
</comment>
<evidence type="ECO:0000255" key="1">
    <source>
        <dbReference type="HAMAP-Rule" id="MF_00351"/>
    </source>
</evidence>